<protein>
    <recommendedName>
        <fullName>Uncharacterized lipoprotein SAUSA300_0418</fullName>
    </recommendedName>
</protein>
<accession>Q2FJJ7</accession>
<sequence length="261" mass="30503">MKSIKRIGLCISLLILIIFVTSCDGDNKIIGDSKEEQIKKSFAKTLDIYPIKNLEDLYDKEGYRDGEFKKDDKGTWLIRSEMKIQLKGENLESRGAVLEINRNTRTAKGHYIVREVVEDSDGMTHNHTKRYPVKMENNKMIPLKPIDDEKVKKEIEEFNFFVQYGNFKELENYKEDEVSYNPEVPIYSAKYQLKNSDYNVEQLRKRYNIPTQKAPKLLLKGSGNLKGSSVGYKNIEFTFIENKEENIYFTDSIYFNPSEDK</sequence>
<reference key="1">
    <citation type="journal article" date="2006" name="Lancet">
        <title>Complete genome sequence of USA300, an epidemic clone of community-acquired meticillin-resistant Staphylococcus aureus.</title>
        <authorList>
            <person name="Diep B.A."/>
            <person name="Gill S.R."/>
            <person name="Chang R.F."/>
            <person name="Phan T.H."/>
            <person name="Chen J.H."/>
            <person name="Davidson M.G."/>
            <person name="Lin F."/>
            <person name="Lin J."/>
            <person name="Carleton H.A."/>
            <person name="Mongodin E.F."/>
            <person name="Sensabaugh G.F."/>
            <person name="Perdreau-Remington F."/>
        </authorList>
    </citation>
    <scope>NUCLEOTIDE SEQUENCE [LARGE SCALE GENOMIC DNA]</scope>
    <source>
        <strain>USA300</strain>
    </source>
</reference>
<dbReference type="EMBL" id="CP000255">
    <property type="protein sequence ID" value="ABD20953.1"/>
    <property type="molecule type" value="Genomic_DNA"/>
</dbReference>
<dbReference type="SMR" id="Q2FJJ7"/>
<dbReference type="KEGG" id="saa:SAUSA300_0418"/>
<dbReference type="HOGENOM" id="CLU_071589_0_1_9"/>
<dbReference type="OMA" id="SCGGNKI"/>
<dbReference type="Proteomes" id="UP000001939">
    <property type="component" value="Chromosome"/>
</dbReference>
<dbReference type="GO" id="GO:0005886">
    <property type="term" value="C:plasma membrane"/>
    <property type="evidence" value="ECO:0007669"/>
    <property type="project" value="UniProtKB-SubCell"/>
</dbReference>
<dbReference type="Gene3D" id="2.50.20.40">
    <property type="match status" value="1"/>
</dbReference>
<dbReference type="InterPro" id="IPR007595">
    <property type="entry name" value="Csa"/>
</dbReference>
<dbReference type="InterPro" id="IPR038641">
    <property type="entry name" value="Csa_sf"/>
</dbReference>
<dbReference type="NCBIfam" id="TIGR01742">
    <property type="entry name" value="SA_tandem_lipo"/>
    <property type="match status" value="1"/>
</dbReference>
<dbReference type="Pfam" id="PF04507">
    <property type="entry name" value="DUF576"/>
    <property type="match status" value="1"/>
</dbReference>
<dbReference type="PROSITE" id="PS51257">
    <property type="entry name" value="PROKAR_LIPOPROTEIN"/>
    <property type="match status" value="1"/>
</dbReference>
<organism>
    <name type="scientific">Staphylococcus aureus (strain USA300)</name>
    <dbReference type="NCBI Taxonomy" id="367830"/>
    <lineage>
        <taxon>Bacteria</taxon>
        <taxon>Bacillati</taxon>
        <taxon>Bacillota</taxon>
        <taxon>Bacilli</taxon>
        <taxon>Bacillales</taxon>
        <taxon>Staphylococcaceae</taxon>
        <taxon>Staphylococcus</taxon>
    </lineage>
</organism>
<name>Y418_STAA3</name>
<proteinExistence type="inferred from homology"/>
<gene>
    <name type="ordered locus">SAUSA300_0418</name>
</gene>
<feature type="signal peptide" evidence="1">
    <location>
        <begin position="1"/>
        <end position="22"/>
    </location>
</feature>
<feature type="chain" id="PRO_0000278528" description="Uncharacterized lipoprotein SAUSA300_0418">
    <location>
        <begin position="23"/>
        <end position="261"/>
    </location>
</feature>
<feature type="lipid moiety-binding region" description="N-palmitoyl cysteine" evidence="1">
    <location>
        <position position="23"/>
    </location>
</feature>
<feature type="lipid moiety-binding region" description="S-diacylglycerol cysteine" evidence="1">
    <location>
        <position position="23"/>
    </location>
</feature>
<keyword id="KW-1003">Cell membrane</keyword>
<keyword id="KW-0449">Lipoprotein</keyword>
<keyword id="KW-0472">Membrane</keyword>
<keyword id="KW-0564">Palmitate</keyword>
<keyword id="KW-0732">Signal</keyword>
<comment type="subcellular location">
    <subcellularLocation>
        <location evidence="1">Cell membrane</location>
        <topology evidence="1">Lipid-anchor</topology>
    </subcellularLocation>
</comment>
<comment type="similarity">
    <text evidence="2">Belongs to the staphylococcal tandem lipoprotein family.</text>
</comment>
<evidence type="ECO:0000255" key="1">
    <source>
        <dbReference type="PROSITE-ProRule" id="PRU00303"/>
    </source>
</evidence>
<evidence type="ECO:0000305" key="2"/>